<proteinExistence type="inferred from homology"/>
<sequence>MAKQSMKAREVKRVALADKYFAKRAELKAIISDVNASDEDRWNAVLKLQTLPRDSSPSRQRNRCRQTGRPHGFLRKFGLSRIKVREAAMRGEIPGLKKASW</sequence>
<gene>
    <name evidence="2" type="primary">rpsN</name>
    <name type="ordered locus">SF3339</name>
    <name type="ordered locus">S4423</name>
</gene>
<keyword id="KW-1185">Reference proteome</keyword>
<keyword id="KW-0687">Ribonucleoprotein</keyword>
<keyword id="KW-0689">Ribosomal protein</keyword>
<keyword id="KW-0694">RNA-binding</keyword>
<keyword id="KW-0699">rRNA-binding</keyword>
<reference key="1">
    <citation type="journal article" date="2002" name="Nucleic Acids Res.">
        <title>Genome sequence of Shigella flexneri 2a: insights into pathogenicity through comparison with genomes of Escherichia coli K12 and O157.</title>
        <authorList>
            <person name="Jin Q."/>
            <person name="Yuan Z."/>
            <person name="Xu J."/>
            <person name="Wang Y."/>
            <person name="Shen Y."/>
            <person name="Lu W."/>
            <person name="Wang J."/>
            <person name="Liu H."/>
            <person name="Yang J."/>
            <person name="Yang F."/>
            <person name="Zhang X."/>
            <person name="Zhang J."/>
            <person name="Yang G."/>
            <person name="Wu H."/>
            <person name="Qu D."/>
            <person name="Dong J."/>
            <person name="Sun L."/>
            <person name="Xue Y."/>
            <person name="Zhao A."/>
            <person name="Gao Y."/>
            <person name="Zhu J."/>
            <person name="Kan B."/>
            <person name="Ding K."/>
            <person name="Chen S."/>
            <person name="Cheng H."/>
            <person name="Yao Z."/>
            <person name="He B."/>
            <person name="Chen R."/>
            <person name="Ma D."/>
            <person name="Qiang B."/>
            <person name="Wen Y."/>
            <person name="Hou Y."/>
            <person name="Yu J."/>
        </authorList>
    </citation>
    <scope>NUCLEOTIDE SEQUENCE [LARGE SCALE GENOMIC DNA]</scope>
    <source>
        <strain>301 / Serotype 2a</strain>
    </source>
</reference>
<reference key="2">
    <citation type="journal article" date="2003" name="Infect. Immun.">
        <title>Complete genome sequence and comparative genomics of Shigella flexneri serotype 2a strain 2457T.</title>
        <authorList>
            <person name="Wei J."/>
            <person name="Goldberg M.B."/>
            <person name="Burland V."/>
            <person name="Venkatesan M.M."/>
            <person name="Deng W."/>
            <person name="Fournier G."/>
            <person name="Mayhew G.F."/>
            <person name="Plunkett G. III"/>
            <person name="Rose D.J."/>
            <person name="Darling A."/>
            <person name="Mau B."/>
            <person name="Perna N.T."/>
            <person name="Payne S.M."/>
            <person name="Runyen-Janecky L.J."/>
            <person name="Zhou S."/>
            <person name="Schwartz D.C."/>
            <person name="Blattner F.R."/>
        </authorList>
    </citation>
    <scope>NUCLEOTIDE SEQUENCE [LARGE SCALE GENOMIC DNA]</scope>
    <source>
        <strain>ATCC 700930 / 2457T / Serotype 2a</strain>
    </source>
</reference>
<organism>
    <name type="scientific">Shigella flexneri</name>
    <dbReference type="NCBI Taxonomy" id="623"/>
    <lineage>
        <taxon>Bacteria</taxon>
        <taxon>Pseudomonadati</taxon>
        <taxon>Pseudomonadota</taxon>
        <taxon>Gammaproteobacteria</taxon>
        <taxon>Enterobacterales</taxon>
        <taxon>Enterobacteriaceae</taxon>
        <taxon>Shigella</taxon>
    </lineage>
</organism>
<protein>
    <recommendedName>
        <fullName evidence="2">Small ribosomal subunit protein uS14</fullName>
    </recommendedName>
    <alternativeName>
        <fullName evidence="3">30S ribosomal protein S14</fullName>
    </alternativeName>
</protein>
<name>RS14_SHIFL</name>
<feature type="initiator methionine" description="Removed" evidence="1">
    <location>
        <position position="1"/>
    </location>
</feature>
<feature type="chain" id="PRO_0000130925" description="Small ribosomal subunit protein uS14">
    <location>
        <begin position="2"/>
        <end position="101"/>
    </location>
</feature>
<comment type="function">
    <text evidence="2">Binds 16S rRNA, required for the assembly of 30S particles and may also be responsible for determining the conformation of the 16S rRNA at the A site.</text>
</comment>
<comment type="subunit">
    <text evidence="2">Part of the 30S ribosomal subunit. Contacts proteins S3 and S10.</text>
</comment>
<comment type="similarity">
    <text evidence="2">Belongs to the universal ribosomal protein uS14 family.</text>
</comment>
<evidence type="ECO:0000250" key="1"/>
<evidence type="ECO:0000255" key="2">
    <source>
        <dbReference type="HAMAP-Rule" id="MF_00537"/>
    </source>
</evidence>
<evidence type="ECO:0000305" key="3"/>
<accession>P0AG62</accession>
<accession>P02370</accession>
<dbReference type="EMBL" id="AE005674">
    <property type="protein sequence ID" value="AAN44802.1"/>
    <property type="molecule type" value="Genomic_DNA"/>
</dbReference>
<dbReference type="EMBL" id="AE014073">
    <property type="protein sequence ID" value="AAP19374.1"/>
    <property type="molecule type" value="Genomic_DNA"/>
</dbReference>
<dbReference type="RefSeq" id="NP_709095.1">
    <property type="nucleotide sequence ID" value="NC_004337.2"/>
</dbReference>
<dbReference type="RefSeq" id="WP_001118930.1">
    <property type="nucleotide sequence ID" value="NZ_WPGW01000088.1"/>
</dbReference>
<dbReference type="SMR" id="P0AG62"/>
<dbReference type="STRING" id="198214.SF3339"/>
<dbReference type="PaxDb" id="198214-SF3339"/>
<dbReference type="GeneID" id="1027019"/>
<dbReference type="GeneID" id="93778680"/>
<dbReference type="KEGG" id="sfl:SF3339"/>
<dbReference type="KEGG" id="sfx:S4423"/>
<dbReference type="PATRIC" id="fig|198214.7.peg.3948"/>
<dbReference type="HOGENOM" id="CLU_139869_0_1_6"/>
<dbReference type="Proteomes" id="UP000001006">
    <property type="component" value="Chromosome"/>
</dbReference>
<dbReference type="Proteomes" id="UP000002673">
    <property type="component" value="Chromosome"/>
</dbReference>
<dbReference type="GO" id="GO:0005737">
    <property type="term" value="C:cytoplasm"/>
    <property type="evidence" value="ECO:0007669"/>
    <property type="project" value="UniProtKB-ARBA"/>
</dbReference>
<dbReference type="GO" id="GO:0015935">
    <property type="term" value="C:small ribosomal subunit"/>
    <property type="evidence" value="ECO:0007669"/>
    <property type="project" value="TreeGrafter"/>
</dbReference>
<dbReference type="GO" id="GO:0019843">
    <property type="term" value="F:rRNA binding"/>
    <property type="evidence" value="ECO:0007669"/>
    <property type="project" value="UniProtKB-UniRule"/>
</dbReference>
<dbReference type="GO" id="GO:0003735">
    <property type="term" value="F:structural constituent of ribosome"/>
    <property type="evidence" value="ECO:0007669"/>
    <property type="project" value="InterPro"/>
</dbReference>
<dbReference type="GO" id="GO:0006412">
    <property type="term" value="P:translation"/>
    <property type="evidence" value="ECO:0007669"/>
    <property type="project" value="UniProtKB-UniRule"/>
</dbReference>
<dbReference type="FunFam" id="1.10.287.1480:FF:000001">
    <property type="entry name" value="30S ribosomal protein S14"/>
    <property type="match status" value="1"/>
</dbReference>
<dbReference type="Gene3D" id="1.10.287.1480">
    <property type="match status" value="1"/>
</dbReference>
<dbReference type="HAMAP" id="MF_00537">
    <property type="entry name" value="Ribosomal_uS14_1"/>
    <property type="match status" value="1"/>
</dbReference>
<dbReference type="InterPro" id="IPR001209">
    <property type="entry name" value="Ribosomal_uS14"/>
</dbReference>
<dbReference type="InterPro" id="IPR023036">
    <property type="entry name" value="Ribosomal_uS14_bac/plastid"/>
</dbReference>
<dbReference type="InterPro" id="IPR018271">
    <property type="entry name" value="Ribosomal_uS14_CS"/>
</dbReference>
<dbReference type="NCBIfam" id="NF006477">
    <property type="entry name" value="PRK08881.1"/>
    <property type="match status" value="1"/>
</dbReference>
<dbReference type="PANTHER" id="PTHR19836">
    <property type="entry name" value="30S RIBOSOMAL PROTEIN S14"/>
    <property type="match status" value="1"/>
</dbReference>
<dbReference type="PANTHER" id="PTHR19836:SF19">
    <property type="entry name" value="SMALL RIBOSOMAL SUBUNIT PROTEIN US14M"/>
    <property type="match status" value="1"/>
</dbReference>
<dbReference type="Pfam" id="PF00253">
    <property type="entry name" value="Ribosomal_S14"/>
    <property type="match status" value="1"/>
</dbReference>
<dbReference type="SUPFAM" id="SSF57716">
    <property type="entry name" value="Glucocorticoid receptor-like (DNA-binding domain)"/>
    <property type="match status" value="1"/>
</dbReference>
<dbReference type="PROSITE" id="PS00527">
    <property type="entry name" value="RIBOSOMAL_S14"/>
    <property type="match status" value="1"/>
</dbReference>